<dbReference type="EC" id="1.2.1.38" evidence="1"/>
<dbReference type="EMBL" id="CP000679">
    <property type="protein sequence ID" value="ABP67124.1"/>
    <property type="molecule type" value="Genomic_DNA"/>
</dbReference>
<dbReference type="RefSeq" id="WP_011917059.1">
    <property type="nucleotide sequence ID" value="NC_009437.1"/>
</dbReference>
<dbReference type="SMR" id="A4XJN9"/>
<dbReference type="STRING" id="351627.Csac_1531"/>
<dbReference type="KEGG" id="csc:Csac_1531"/>
<dbReference type="eggNOG" id="COG0002">
    <property type="taxonomic scope" value="Bacteria"/>
</dbReference>
<dbReference type="HOGENOM" id="CLU_006384_0_1_9"/>
<dbReference type="OrthoDB" id="9801289at2"/>
<dbReference type="UniPathway" id="UPA00068">
    <property type="reaction ID" value="UER00108"/>
</dbReference>
<dbReference type="Proteomes" id="UP000000256">
    <property type="component" value="Chromosome"/>
</dbReference>
<dbReference type="GO" id="GO:0005737">
    <property type="term" value="C:cytoplasm"/>
    <property type="evidence" value="ECO:0007669"/>
    <property type="project" value="UniProtKB-SubCell"/>
</dbReference>
<dbReference type="GO" id="GO:0003942">
    <property type="term" value="F:N-acetyl-gamma-glutamyl-phosphate reductase activity"/>
    <property type="evidence" value="ECO:0007669"/>
    <property type="project" value="UniProtKB-UniRule"/>
</dbReference>
<dbReference type="GO" id="GO:0051287">
    <property type="term" value="F:NAD binding"/>
    <property type="evidence" value="ECO:0007669"/>
    <property type="project" value="InterPro"/>
</dbReference>
<dbReference type="GO" id="GO:0070401">
    <property type="term" value="F:NADP+ binding"/>
    <property type="evidence" value="ECO:0007669"/>
    <property type="project" value="InterPro"/>
</dbReference>
<dbReference type="GO" id="GO:0006526">
    <property type="term" value="P:L-arginine biosynthetic process"/>
    <property type="evidence" value="ECO:0007669"/>
    <property type="project" value="UniProtKB-UniRule"/>
</dbReference>
<dbReference type="CDD" id="cd23934">
    <property type="entry name" value="AGPR_1_C"/>
    <property type="match status" value="1"/>
</dbReference>
<dbReference type="CDD" id="cd17895">
    <property type="entry name" value="AGPR_1_N"/>
    <property type="match status" value="1"/>
</dbReference>
<dbReference type="FunFam" id="3.30.360.10:FF:000014">
    <property type="entry name" value="N-acetyl-gamma-glutamyl-phosphate reductase"/>
    <property type="match status" value="1"/>
</dbReference>
<dbReference type="Gene3D" id="3.30.360.10">
    <property type="entry name" value="Dihydrodipicolinate Reductase, domain 2"/>
    <property type="match status" value="1"/>
</dbReference>
<dbReference type="Gene3D" id="3.40.50.720">
    <property type="entry name" value="NAD(P)-binding Rossmann-like Domain"/>
    <property type="match status" value="1"/>
</dbReference>
<dbReference type="HAMAP" id="MF_00150">
    <property type="entry name" value="ArgC_type1"/>
    <property type="match status" value="1"/>
</dbReference>
<dbReference type="InterPro" id="IPR023013">
    <property type="entry name" value="AGPR_AS"/>
</dbReference>
<dbReference type="InterPro" id="IPR000706">
    <property type="entry name" value="AGPR_type-1"/>
</dbReference>
<dbReference type="InterPro" id="IPR036291">
    <property type="entry name" value="NAD(P)-bd_dom_sf"/>
</dbReference>
<dbReference type="InterPro" id="IPR050085">
    <property type="entry name" value="NAGSA_dehydrogenase"/>
</dbReference>
<dbReference type="InterPro" id="IPR000534">
    <property type="entry name" value="Semialdehyde_DH_NAD-bd"/>
</dbReference>
<dbReference type="NCBIfam" id="TIGR01850">
    <property type="entry name" value="argC"/>
    <property type="match status" value="1"/>
</dbReference>
<dbReference type="PANTHER" id="PTHR32338:SF10">
    <property type="entry name" value="N-ACETYL-GAMMA-GLUTAMYL-PHOSPHATE REDUCTASE, CHLOROPLASTIC-RELATED"/>
    <property type="match status" value="1"/>
</dbReference>
<dbReference type="PANTHER" id="PTHR32338">
    <property type="entry name" value="N-ACETYL-GAMMA-GLUTAMYL-PHOSPHATE REDUCTASE, CHLOROPLASTIC-RELATED-RELATED"/>
    <property type="match status" value="1"/>
</dbReference>
<dbReference type="Pfam" id="PF01118">
    <property type="entry name" value="Semialdhyde_dh"/>
    <property type="match status" value="1"/>
</dbReference>
<dbReference type="Pfam" id="PF22698">
    <property type="entry name" value="Semialdhyde_dhC_1"/>
    <property type="match status" value="1"/>
</dbReference>
<dbReference type="SMART" id="SM00859">
    <property type="entry name" value="Semialdhyde_dh"/>
    <property type="match status" value="1"/>
</dbReference>
<dbReference type="SUPFAM" id="SSF55347">
    <property type="entry name" value="Glyceraldehyde-3-phosphate dehydrogenase-like, C-terminal domain"/>
    <property type="match status" value="1"/>
</dbReference>
<dbReference type="SUPFAM" id="SSF51735">
    <property type="entry name" value="NAD(P)-binding Rossmann-fold domains"/>
    <property type="match status" value="1"/>
</dbReference>
<dbReference type="PROSITE" id="PS01224">
    <property type="entry name" value="ARGC"/>
    <property type="match status" value="1"/>
</dbReference>
<keyword id="KW-0028">Amino-acid biosynthesis</keyword>
<keyword id="KW-0055">Arginine biosynthesis</keyword>
<keyword id="KW-0963">Cytoplasm</keyword>
<keyword id="KW-0521">NADP</keyword>
<keyword id="KW-0560">Oxidoreductase</keyword>
<name>ARGC_CALS8</name>
<gene>
    <name evidence="1" type="primary">argC</name>
    <name type="ordered locus">Csac_1531</name>
</gene>
<comment type="function">
    <text evidence="1">Catalyzes the NADPH-dependent reduction of N-acetyl-5-glutamyl phosphate to yield N-acetyl-L-glutamate 5-semialdehyde.</text>
</comment>
<comment type="catalytic activity">
    <reaction evidence="1">
        <text>N-acetyl-L-glutamate 5-semialdehyde + phosphate + NADP(+) = N-acetyl-L-glutamyl 5-phosphate + NADPH + H(+)</text>
        <dbReference type="Rhea" id="RHEA:21588"/>
        <dbReference type="ChEBI" id="CHEBI:15378"/>
        <dbReference type="ChEBI" id="CHEBI:29123"/>
        <dbReference type="ChEBI" id="CHEBI:43474"/>
        <dbReference type="ChEBI" id="CHEBI:57783"/>
        <dbReference type="ChEBI" id="CHEBI:57936"/>
        <dbReference type="ChEBI" id="CHEBI:58349"/>
        <dbReference type="EC" id="1.2.1.38"/>
    </reaction>
</comment>
<comment type="pathway">
    <text evidence="1">Amino-acid biosynthesis; L-arginine biosynthesis; N(2)-acetyl-L-ornithine from L-glutamate: step 3/4.</text>
</comment>
<comment type="subcellular location">
    <subcellularLocation>
        <location evidence="1">Cytoplasm</location>
    </subcellularLocation>
</comment>
<comment type="similarity">
    <text evidence="1">Belongs to the NAGSA dehydrogenase family. Type 1 subfamily.</text>
</comment>
<organism>
    <name type="scientific">Caldicellulosiruptor saccharolyticus (strain ATCC 43494 / DSM 8903 / Tp8T 6331)</name>
    <dbReference type="NCBI Taxonomy" id="351627"/>
    <lineage>
        <taxon>Bacteria</taxon>
        <taxon>Bacillati</taxon>
        <taxon>Bacillota</taxon>
        <taxon>Bacillota incertae sedis</taxon>
        <taxon>Caldicellulosiruptorales</taxon>
        <taxon>Caldicellulosiruptoraceae</taxon>
        <taxon>Caldicellulosiruptor</taxon>
    </lineage>
</organism>
<protein>
    <recommendedName>
        <fullName evidence="1">N-acetyl-gamma-glutamyl-phosphate reductase</fullName>
        <shortName evidence="1">AGPR</shortName>
        <ecNumber evidence="1">1.2.1.38</ecNumber>
    </recommendedName>
    <alternativeName>
        <fullName evidence="1">N-acetyl-glutamate semialdehyde dehydrogenase</fullName>
        <shortName evidence="1">NAGSA dehydrogenase</shortName>
    </alternativeName>
</protein>
<evidence type="ECO:0000255" key="1">
    <source>
        <dbReference type="HAMAP-Rule" id="MF_00150"/>
    </source>
</evidence>
<accession>A4XJN9</accession>
<sequence>MIKASIIGASGYVGIELIRLLLKHPEVEISSIISSSNKDISIENTNPQFKKILNLTFKEFDIDLVKEADVVFCALPHGVSQEYVKVAYDLGKVVIDLSSDFRYKDLTRYSKDYGNHKYPELLNESSYGLCEIFREEIKSSKIVGNPGCYPTSAILGLAPLLKNKLIQKDSIIIDSKSGVSGAGKKADFAYSFCEVDENFKAYGVAKHRHTSEIEEKCSFLFGEDLNLSFTPHLLPVKRGILSTIYATFTKSLNKNELIEIYKEFYRDEFFIRIYEDSLPELKYVTGTNFVDIGLEVDKKTNRVIVISCIDNLIKGAAGQAIQNMNIKFSLNEKTGLVIVGEYF</sequence>
<proteinExistence type="inferred from homology"/>
<feature type="chain" id="PRO_1000010983" description="N-acetyl-gamma-glutamyl-phosphate reductase">
    <location>
        <begin position="1"/>
        <end position="343"/>
    </location>
</feature>
<feature type="active site" evidence="1">
    <location>
        <position position="148"/>
    </location>
</feature>
<reference key="1">
    <citation type="submission" date="2007-04" db="EMBL/GenBank/DDBJ databases">
        <title>Genome sequence of the thermophilic hydrogen-producing bacterium Caldicellulosiruptor saccharolyticus DSM 8903.</title>
        <authorList>
            <person name="Copeland A."/>
            <person name="Lucas S."/>
            <person name="Lapidus A."/>
            <person name="Barry K."/>
            <person name="Detter J.C."/>
            <person name="Glavina del Rio T."/>
            <person name="Hammon N."/>
            <person name="Israni S."/>
            <person name="Dalin E."/>
            <person name="Tice H."/>
            <person name="Pitluck S."/>
            <person name="Kiss H."/>
            <person name="Brettin T."/>
            <person name="Bruce D."/>
            <person name="Han C."/>
            <person name="Schmutz J."/>
            <person name="Larimer F."/>
            <person name="Land M."/>
            <person name="Hauser L."/>
            <person name="Kyrpides N."/>
            <person name="Lykidis A."/>
            <person name="van de Werken H.J.G."/>
            <person name="Verhaart M.R.A."/>
            <person name="VanFossen A.L."/>
            <person name="Lewis D.L."/>
            <person name="Nichols J.D."/>
            <person name="Goorissen H.P."/>
            <person name="van Niel E.W.J."/>
            <person name="Stams F.J.M."/>
            <person name="Willquist K.U."/>
            <person name="Ward D.E."/>
            <person name="van der Oost J."/>
            <person name="Kelly R.M."/>
            <person name="Kengen S.M.W."/>
            <person name="Richardson P."/>
        </authorList>
    </citation>
    <scope>NUCLEOTIDE SEQUENCE [LARGE SCALE GENOMIC DNA]</scope>
    <source>
        <strain>ATCC 43494 / DSM 8903 / Tp8T 6331</strain>
    </source>
</reference>